<organism>
    <name type="scientific">Arabidopsis thaliana</name>
    <name type="common">Mouse-ear cress</name>
    <dbReference type="NCBI Taxonomy" id="3702"/>
    <lineage>
        <taxon>Eukaryota</taxon>
        <taxon>Viridiplantae</taxon>
        <taxon>Streptophyta</taxon>
        <taxon>Embryophyta</taxon>
        <taxon>Tracheophyta</taxon>
        <taxon>Spermatophyta</taxon>
        <taxon>Magnoliopsida</taxon>
        <taxon>eudicotyledons</taxon>
        <taxon>Gunneridae</taxon>
        <taxon>Pentapetalae</taxon>
        <taxon>rosids</taxon>
        <taxon>malvids</taxon>
        <taxon>Brassicales</taxon>
        <taxon>Brassicaceae</taxon>
        <taxon>Camelineae</taxon>
        <taxon>Arabidopsis</taxon>
    </lineage>
</organism>
<reference key="1">
    <citation type="journal article" date="1999" name="Nature">
        <title>Sequence and analysis of chromosome 2 of the plant Arabidopsis thaliana.</title>
        <authorList>
            <person name="Lin X."/>
            <person name="Kaul S."/>
            <person name="Rounsley S.D."/>
            <person name="Shea T.P."/>
            <person name="Benito M.-I."/>
            <person name="Town C.D."/>
            <person name="Fujii C.Y."/>
            <person name="Mason T.M."/>
            <person name="Bowman C.L."/>
            <person name="Barnstead M.E."/>
            <person name="Feldblyum T.V."/>
            <person name="Buell C.R."/>
            <person name="Ketchum K.A."/>
            <person name="Lee J.J."/>
            <person name="Ronning C.M."/>
            <person name="Koo H.L."/>
            <person name="Moffat K.S."/>
            <person name="Cronin L.A."/>
            <person name="Shen M."/>
            <person name="Pai G."/>
            <person name="Van Aken S."/>
            <person name="Umayam L."/>
            <person name="Tallon L.J."/>
            <person name="Gill J.E."/>
            <person name="Adams M.D."/>
            <person name="Carrera A.J."/>
            <person name="Creasy T.H."/>
            <person name="Goodman H.M."/>
            <person name="Somerville C.R."/>
            <person name="Copenhaver G.P."/>
            <person name="Preuss D."/>
            <person name="Nierman W.C."/>
            <person name="White O."/>
            <person name="Eisen J.A."/>
            <person name="Salzberg S.L."/>
            <person name="Fraser C.M."/>
            <person name="Venter J.C."/>
        </authorList>
    </citation>
    <scope>NUCLEOTIDE SEQUENCE [LARGE SCALE GENOMIC DNA]</scope>
    <source>
        <strain>cv. Columbia</strain>
    </source>
</reference>
<reference key="2">
    <citation type="journal article" date="2017" name="Plant J.">
        <title>Araport11: a complete reannotation of the Arabidopsis thaliana reference genome.</title>
        <authorList>
            <person name="Cheng C.Y."/>
            <person name="Krishnakumar V."/>
            <person name="Chan A.P."/>
            <person name="Thibaud-Nissen F."/>
            <person name="Schobel S."/>
            <person name="Town C.D."/>
        </authorList>
    </citation>
    <scope>GENOME REANNOTATION</scope>
    <source>
        <strain>cv. Columbia</strain>
    </source>
</reference>
<reference key="3">
    <citation type="journal article" date="2003" name="Science">
        <title>Empirical analysis of transcriptional activity in the Arabidopsis genome.</title>
        <authorList>
            <person name="Yamada K."/>
            <person name="Lim J."/>
            <person name="Dale J.M."/>
            <person name="Chen H."/>
            <person name="Shinn P."/>
            <person name="Palm C.J."/>
            <person name="Southwick A.M."/>
            <person name="Wu H.C."/>
            <person name="Kim C.J."/>
            <person name="Nguyen M."/>
            <person name="Pham P.K."/>
            <person name="Cheuk R.F."/>
            <person name="Karlin-Newmann G."/>
            <person name="Liu S.X."/>
            <person name="Lam B."/>
            <person name="Sakano H."/>
            <person name="Wu T."/>
            <person name="Yu G."/>
            <person name="Miranda M."/>
            <person name="Quach H.L."/>
            <person name="Tripp M."/>
            <person name="Chang C.H."/>
            <person name="Lee J.M."/>
            <person name="Toriumi M.J."/>
            <person name="Chan M.M."/>
            <person name="Tang C.C."/>
            <person name="Onodera C.S."/>
            <person name="Deng J.M."/>
            <person name="Akiyama K."/>
            <person name="Ansari Y."/>
            <person name="Arakawa T."/>
            <person name="Banh J."/>
            <person name="Banno F."/>
            <person name="Bowser L."/>
            <person name="Brooks S.Y."/>
            <person name="Carninci P."/>
            <person name="Chao Q."/>
            <person name="Choy N."/>
            <person name="Enju A."/>
            <person name="Goldsmith A.D."/>
            <person name="Gurjal M."/>
            <person name="Hansen N.F."/>
            <person name="Hayashizaki Y."/>
            <person name="Johnson-Hopson C."/>
            <person name="Hsuan V.W."/>
            <person name="Iida K."/>
            <person name="Karnes M."/>
            <person name="Khan S."/>
            <person name="Koesema E."/>
            <person name="Ishida J."/>
            <person name="Jiang P.X."/>
            <person name="Jones T."/>
            <person name="Kawai J."/>
            <person name="Kamiya A."/>
            <person name="Meyers C."/>
            <person name="Nakajima M."/>
            <person name="Narusaka M."/>
            <person name="Seki M."/>
            <person name="Sakurai T."/>
            <person name="Satou M."/>
            <person name="Tamse R."/>
            <person name="Vaysberg M."/>
            <person name="Wallender E.K."/>
            <person name="Wong C."/>
            <person name="Yamamura Y."/>
            <person name="Yuan S."/>
            <person name="Shinozaki K."/>
            <person name="Davis R.W."/>
            <person name="Theologis A."/>
            <person name="Ecker J.R."/>
        </authorList>
    </citation>
    <scope>NUCLEOTIDE SEQUENCE [LARGE SCALE MRNA]</scope>
    <source>
        <strain>cv. Columbia</strain>
    </source>
</reference>
<reference key="4">
    <citation type="submission" date="2002-03" db="EMBL/GenBank/DDBJ databases">
        <title>Full-length cDNA from Arabidopsis thaliana.</title>
        <authorList>
            <person name="Brover V.V."/>
            <person name="Troukhan M.E."/>
            <person name="Alexandrov N.A."/>
            <person name="Lu Y.-P."/>
            <person name="Flavell R.B."/>
            <person name="Feldmann K.A."/>
        </authorList>
    </citation>
    <scope>NUCLEOTIDE SEQUENCE [LARGE SCALE MRNA]</scope>
</reference>
<reference key="5">
    <citation type="journal article" date="2014" name="PLoS ONE">
        <title>The Arabidopsis PLAT domain protein1 is critically involved in abiotic stress tolerance.</title>
        <authorList>
            <person name="Hyun T.K."/>
            <person name="van der Graaff E."/>
            <person name="Albacete A."/>
            <person name="Eom S.H."/>
            <person name="Grosskinsky D.K."/>
            <person name="Boehm H."/>
            <person name="Janschek U."/>
            <person name="Rim Y."/>
            <person name="Ali W.W."/>
            <person name="Kim S.Y."/>
            <person name="Roitsch T."/>
        </authorList>
    </citation>
    <scope>INDUCTION</scope>
    <scope>DISRUPTION PHENOTYPE</scope>
</reference>
<keyword id="KW-0256">Endoplasmic reticulum</keyword>
<keyword id="KW-1185">Reference proteome</keyword>
<keyword id="KW-0732">Signal</keyword>
<keyword id="KW-0346">Stress response</keyword>
<sequence>MMPRRDVLFLSLLLVIATVSAVALADDEADCVYTFFLRTGSTFKAGTDSIISARVYDKYGDYIGIRNLEAWGGLMGPGYNYYERGNLDIFSGKAPCLPSPVCSLNLTSDGSGDHHGWYVNYVEVTTAGVHAKCSYQSFDVEQWLASDTSPYELSAVRNNCPVSLRESVGRVGSEIRKTLSWIV</sequence>
<feature type="signal peptide" evidence="2">
    <location>
        <begin position="1"/>
        <end position="25"/>
    </location>
</feature>
<feature type="chain" id="PRO_5006752344" description="PLAT domain-containing protein 2">
    <location>
        <begin position="26"/>
        <end position="183"/>
    </location>
</feature>
<feature type="domain" description="PLAT" evidence="3">
    <location>
        <begin position="31"/>
        <end position="158"/>
    </location>
</feature>
<feature type="sequence conflict" description="In Ref. 4; AAM62648." evidence="6" ref="4">
    <original>F</original>
    <variation>Y</variation>
    <location>
        <position position="36"/>
    </location>
</feature>
<dbReference type="EMBL" id="AC007168">
    <property type="protein sequence ID" value="AAD23623.1"/>
    <property type="molecule type" value="Genomic_DNA"/>
</dbReference>
<dbReference type="EMBL" id="CP002685">
    <property type="protein sequence ID" value="AEC07274.1"/>
    <property type="molecule type" value="Genomic_DNA"/>
</dbReference>
<dbReference type="EMBL" id="BT002824">
    <property type="protein sequence ID" value="AAO22643.1"/>
    <property type="molecule type" value="mRNA"/>
</dbReference>
<dbReference type="EMBL" id="BT004384">
    <property type="protein sequence ID" value="AAO42378.1"/>
    <property type="molecule type" value="mRNA"/>
</dbReference>
<dbReference type="EMBL" id="AY085421">
    <property type="protein sequence ID" value="AAM62648.1"/>
    <property type="status" value="ALT_INIT"/>
    <property type="molecule type" value="mRNA"/>
</dbReference>
<dbReference type="PIR" id="G84609">
    <property type="entry name" value="G84609"/>
</dbReference>
<dbReference type="RefSeq" id="NP_565527.1">
    <property type="nucleotide sequence ID" value="NM_127785.4"/>
</dbReference>
<dbReference type="SMR" id="Q9SIE7"/>
<dbReference type="FunCoup" id="Q9SIE7">
    <property type="interactions" value="212"/>
</dbReference>
<dbReference type="STRING" id="3702.Q9SIE7"/>
<dbReference type="PaxDb" id="3702-AT2G22170.1"/>
<dbReference type="ProteomicsDB" id="226200"/>
<dbReference type="EnsemblPlants" id="AT2G22170.1">
    <property type="protein sequence ID" value="AT2G22170.1"/>
    <property type="gene ID" value="AT2G22170"/>
</dbReference>
<dbReference type="GeneID" id="816751"/>
<dbReference type="Gramene" id="AT2G22170.1">
    <property type="protein sequence ID" value="AT2G22170.1"/>
    <property type="gene ID" value="AT2G22170"/>
</dbReference>
<dbReference type="KEGG" id="ath:AT2G22170"/>
<dbReference type="Araport" id="AT2G22170"/>
<dbReference type="TAIR" id="AT2G22170">
    <property type="gene designation" value="PLAT2"/>
</dbReference>
<dbReference type="eggNOG" id="ENOG502RZE1">
    <property type="taxonomic scope" value="Eukaryota"/>
</dbReference>
<dbReference type="HOGENOM" id="CLU_092946_0_0_1"/>
<dbReference type="InParanoid" id="Q9SIE7"/>
<dbReference type="OMA" id="HAKCSYQ"/>
<dbReference type="PhylomeDB" id="Q9SIE7"/>
<dbReference type="PRO" id="PR:Q9SIE7"/>
<dbReference type="Proteomes" id="UP000006548">
    <property type="component" value="Chromosome 2"/>
</dbReference>
<dbReference type="ExpressionAtlas" id="Q9SIE7">
    <property type="expression patterns" value="baseline and differential"/>
</dbReference>
<dbReference type="GO" id="GO:0005783">
    <property type="term" value="C:endoplasmic reticulum"/>
    <property type="evidence" value="ECO:0007669"/>
    <property type="project" value="UniProtKB-SubCell"/>
</dbReference>
<dbReference type="GO" id="GO:0099503">
    <property type="term" value="C:secretory vesicle"/>
    <property type="evidence" value="ECO:0007005"/>
    <property type="project" value="TAIR"/>
</dbReference>
<dbReference type="GO" id="GO:0009579">
    <property type="term" value="C:thylakoid"/>
    <property type="evidence" value="ECO:0007005"/>
    <property type="project" value="TAIR"/>
</dbReference>
<dbReference type="GO" id="GO:0005773">
    <property type="term" value="C:vacuole"/>
    <property type="evidence" value="ECO:0007005"/>
    <property type="project" value="TAIR"/>
</dbReference>
<dbReference type="CDD" id="cd01754">
    <property type="entry name" value="PLAT_plant_stress"/>
    <property type="match status" value="1"/>
</dbReference>
<dbReference type="Gene3D" id="2.60.60.20">
    <property type="entry name" value="PLAT/LH2 domain"/>
    <property type="match status" value="1"/>
</dbReference>
<dbReference type="InterPro" id="IPR001024">
    <property type="entry name" value="PLAT/LH2_dom"/>
</dbReference>
<dbReference type="InterPro" id="IPR036392">
    <property type="entry name" value="PLAT/LH2_dom_sf"/>
</dbReference>
<dbReference type="PANTHER" id="PTHR31718">
    <property type="entry name" value="PLAT DOMAIN-CONTAINING PROTEIN"/>
    <property type="match status" value="1"/>
</dbReference>
<dbReference type="PANTHER" id="PTHR31718:SF0">
    <property type="entry name" value="PLAT DOMAIN-CONTAINING PROTEIN 2"/>
    <property type="match status" value="1"/>
</dbReference>
<dbReference type="Pfam" id="PF01477">
    <property type="entry name" value="PLAT"/>
    <property type="match status" value="1"/>
</dbReference>
<dbReference type="SUPFAM" id="SSF49723">
    <property type="entry name" value="Lipase/lipooxygenase domain (PLAT/LH2 domain)"/>
    <property type="match status" value="1"/>
</dbReference>
<dbReference type="PROSITE" id="PS50095">
    <property type="entry name" value="PLAT"/>
    <property type="match status" value="1"/>
</dbReference>
<gene>
    <name evidence="5" type="primary">PLAT2</name>
    <name evidence="7" type="ordered locus">At2g22170</name>
</gene>
<proteinExistence type="evidence at transcript level"/>
<evidence type="ECO:0000250" key="1">
    <source>
        <dbReference type="UniProtKB" id="O65660"/>
    </source>
</evidence>
<evidence type="ECO:0000255" key="2"/>
<evidence type="ECO:0000255" key="3">
    <source>
        <dbReference type="PROSITE-ProRule" id="PRU00152"/>
    </source>
</evidence>
<evidence type="ECO:0000269" key="4">
    <source>
    </source>
</evidence>
<evidence type="ECO:0000303" key="5">
    <source>
    </source>
</evidence>
<evidence type="ECO:0000305" key="6"/>
<evidence type="ECO:0000312" key="7">
    <source>
        <dbReference type="Araport" id="AT2G22170"/>
    </source>
</evidence>
<name>PLAT2_ARATH</name>
<protein>
    <recommendedName>
        <fullName evidence="6">PLAT domain-containing protein 2</fullName>
        <shortName evidence="5">AtPLAT2</shortName>
        <shortName evidence="5">PLAT domain protein 2</shortName>
    </recommendedName>
</protein>
<accession>Q9SIE7</accession>
<accession>Q8LEG8</accession>
<comment type="function">
    <text evidence="1">Involved in response to abiotic stress.</text>
</comment>
<comment type="subcellular location">
    <subcellularLocation>
        <location evidence="1">Endoplasmic reticulum</location>
    </subcellularLocation>
</comment>
<comment type="induction">
    <text evidence="4">Down-regulated by salt stress.</text>
</comment>
<comment type="disruption phenotype">
    <text evidence="4">No visible phenotype under normal growth conditions.</text>
</comment>
<comment type="sequence caution" evidence="6">
    <conflict type="erroneous initiation">
        <sequence resource="EMBL-CDS" id="AAM62648"/>
    </conflict>
    <text>Truncated N-terminus.</text>
</comment>